<feature type="chain" id="PRO_0000413020" description="RNA-binding motif protein, X chromosome">
    <location>
        <begin position="1"/>
        <end position="379"/>
    </location>
</feature>
<feature type="domain" description="RRM" evidence="2">
    <location>
        <begin position="8"/>
        <end position="86"/>
    </location>
</feature>
<feature type="region of interest" description="Disordered" evidence="3">
    <location>
        <begin position="57"/>
        <end position="379"/>
    </location>
</feature>
<feature type="compositionally biased region" description="Basic and acidic residues" evidence="3">
    <location>
        <begin position="60"/>
        <end position="80"/>
    </location>
</feature>
<feature type="compositionally biased region" description="Basic and acidic residues" evidence="3">
    <location>
        <begin position="165"/>
        <end position="198"/>
    </location>
</feature>
<feature type="compositionally biased region" description="Basic and acidic residues" evidence="3">
    <location>
        <begin position="223"/>
        <end position="238"/>
    </location>
</feature>
<feature type="compositionally biased region" description="Basic and acidic residues" evidence="3">
    <location>
        <begin position="245"/>
        <end position="261"/>
    </location>
</feature>
<feature type="compositionally biased region" description="Low complexity" evidence="3">
    <location>
        <begin position="304"/>
        <end position="327"/>
    </location>
</feature>
<feature type="compositionally biased region" description="Basic and acidic residues" evidence="3">
    <location>
        <begin position="330"/>
        <end position="339"/>
    </location>
</feature>
<feature type="compositionally biased region" description="Basic and acidic residues" evidence="3">
    <location>
        <begin position="368"/>
        <end position="379"/>
    </location>
</feature>
<feature type="splice variant" id="VSP_041850" description="In isoform 2." evidence="5">
    <location>
        <begin position="278"/>
        <end position="379"/>
    </location>
</feature>
<feature type="sequence conflict" description="In Ref. 1; AAQ94565." evidence="6" ref="1">
    <original>G</original>
    <variation>S</variation>
    <location>
        <position position="60"/>
    </location>
</feature>
<comment type="function">
    <text evidence="1 4">RNA-binding protein that plays several role in the regulation of pre- and post-transcriptional processes. Implicated in tissue-specific regulation of gene transcription and alternative splicing of pre-mRNAs. Associates with chromatin. Associates with nascent mRNAs transcribed by RNA polymerase II. Component of the supraspliceosome complex that regulates pre-mRNA alternative splice site selection. Binds non-specifically to pre-mRNAs (By similarity). Required for embryonic development, in particular of the brain.</text>
</comment>
<comment type="subcellular location">
    <subcellularLocation>
        <location evidence="1">Nucleus</location>
    </subcellularLocation>
</comment>
<comment type="alternative products">
    <event type="alternative splicing"/>
    <isoform>
        <id>Q7ZWA3-1</id>
        <name>1</name>
        <sequence type="displayed"/>
    </isoform>
    <isoform>
        <id>Q7ZWA3-2</id>
        <name>2</name>
        <sequence type="described" ref="VSP_041850"/>
    </isoform>
</comment>
<comment type="developmental stage">
    <text evidence="4">Expressed both maternally and zygotically. Expressed widely in the embryo up to 24 hr post-fertilization (hpf). Expressed predominantly in the brain, branchial arches, and liver primordium between 24 to 72 hpf. Expressed in the midbrain at 7 days post-fertilization (dpf).</text>
</comment>
<evidence type="ECO:0000250" key="1"/>
<evidence type="ECO:0000255" key="2">
    <source>
        <dbReference type="PROSITE-ProRule" id="PRU00176"/>
    </source>
</evidence>
<evidence type="ECO:0000256" key="3">
    <source>
        <dbReference type="SAM" id="MobiDB-lite"/>
    </source>
</evidence>
<evidence type="ECO:0000269" key="4">
    <source>
    </source>
</evidence>
<evidence type="ECO:0000303" key="5">
    <source ref="4"/>
</evidence>
<evidence type="ECO:0000305" key="6"/>
<keyword id="KW-0025">Alternative splicing</keyword>
<keyword id="KW-0217">Developmental protein</keyword>
<keyword id="KW-0507">mRNA processing</keyword>
<keyword id="KW-0508">mRNA splicing</keyword>
<keyword id="KW-0539">Nucleus</keyword>
<keyword id="KW-1185">Reference proteome</keyword>
<keyword id="KW-0687">Ribonucleoprotein</keyword>
<keyword id="KW-0694">RNA-binding</keyword>
<keyword id="KW-0747">Spliceosome</keyword>
<keyword id="KW-0804">Transcription</keyword>
<name>RBMX_DANRE</name>
<protein>
    <recommendedName>
        <fullName>RNA-binding motif protein, X chromosome</fullName>
    </recommendedName>
    <alternativeName>
        <fullName>Heterogeneous nuclear ribonucleoprotein G</fullName>
        <shortName>hnRNP G</shortName>
    </alternativeName>
</protein>
<proteinExistence type="evidence at transcript level"/>
<gene>
    <name type="primary">rbmx</name>
</gene>
<sequence length="379" mass="41621">MAEADRPGKLFIGGLNTETSEKVLEAYFSKFGRISEVLLMKDRETNKSRGFAFVTYENPGDAKDAAREMNGKPLDGKPIKVEQATKPQFETSGRRGPPPPRSRGPSRGLRGSRGGPSGMRGPPSREPFFKGMSSRGPPPMKRGPPERNGGPPPKRSAPSGPMGRPSRDRDPYGPPPRRDSLMSRRDDGPPHRDDHYGSKDSYSSRDYMSSRDSRDYGPPPRDYPYREYSGHSSSRDDYGSGSRGYSDRDGYGGGREPRGYIDRPSAGSYRDPYDGYGNSRSAPPSRGPPPSYSGSGGSSRYDDYGSSSRDGYGSRDSYPSSRSDPYSTNRGDRPGRQERGPPPLERGYPREYSSSSRGAPRGGGRGGRRPDRGMGRNRY</sequence>
<dbReference type="EMBL" id="AJ717349">
    <property type="protein sequence ID" value="CAG30733.1"/>
    <property type="molecule type" value="mRNA"/>
</dbReference>
<dbReference type="EMBL" id="AY394938">
    <property type="protein sequence ID" value="AAQ94565.1"/>
    <property type="molecule type" value="mRNA"/>
</dbReference>
<dbReference type="EMBL" id="AL929434">
    <property type="status" value="NOT_ANNOTATED_CDS"/>
    <property type="molecule type" value="Genomic_DNA"/>
</dbReference>
<dbReference type="EMBL" id="BC049509">
    <property type="protein sequence ID" value="AAH49509.1"/>
    <property type="molecule type" value="mRNA"/>
</dbReference>
<dbReference type="EMBL" id="BC071326">
    <property type="protein sequence ID" value="AAH71326.1"/>
    <property type="molecule type" value="mRNA"/>
</dbReference>
<dbReference type="RefSeq" id="NP_997763.1">
    <molecule id="Q7ZWA3-1"/>
    <property type="nucleotide sequence ID" value="NM_212598.1"/>
</dbReference>
<dbReference type="SMR" id="Q7ZWA3"/>
<dbReference type="FunCoup" id="Q7ZWA3">
    <property type="interactions" value="701"/>
</dbReference>
<dbReference type="STRING" id="7955.ENSDARP00000111610"/>
<dbReference type="PaxDb" id="7955-ENSDARP00000009865"/>
<dbReference type="Ensembl" id="ENSDART00000128730">
    <molecule id="Q7ZWA3-1"/>
    <property type="protein sequence ID" value="ENSDARP00000111610"/>
    <property type="gene ID" value="ENSDARG00000014244"/>
</dbReference>
<dbReference type="Ensembl" id="ENSDART00000186597">
    <molecule id="Q7ZWA3-1"/>
    <property type="protein sequence ID" value="ENSDARP00000145351"/>
    <property type="gene ID" value="ENSDARG00000014244"/>
</dbReference>
<dbReference type="GeneID" id="321860"/>
<dbReference type="KEGG" id="dre:321860"/>
<dbReference type="AGR" id="ZFIN:ZDB-GENE-030131-579"/>
<dbReference type="CTD" id="27316"/>
<dbReference type="ZFIN" id="ZDB-GENE-030131-579">
    <property type="gene designation" value="rbmx"/>
</dbReference>
<dbReference type="eggNOG" id="ENOG502QS9N">
    <property type="taxonomic scope" value="Eukaryota"/>
</dbReference>
<dbReference type="InParanoid" id="Q7ZWA3"/>
<dbReference type="OMA" id="HEGFFMG"/>
<dbReference type="OrthoDB" id="439808at2759"/>
<dbReference type="TreeFam" id="TF331833"/>
<dbReference type="PRO" id="PR:Q7ZWA3"/>
<dbReference type="Proteomes" id="UP000000437">
    <property type="component" value="Chromosome 14"/>
</dbReference>
<dbReference type="Bgee" id="ENSDARG00000014244">
    <property type="expression patterns" value="Expressed in gastrula and 43 other cell types or tissues"/>
</dbReference>
<dbReference type="ExpressionAtlas" id="Q7ZWA3">
    <property type="expression patterns" value="baseline"/>
</dbReference>
<dbReference type="GO" id="GO:0071013">
    <property type="term" value="C:catalytic step 2 spliceosome"/>
    <property type="evidence" value="ECO:0000250"/>
    <property type="project" value="UniProtKB"/>
</dbReference>
<dbReference type="GO" id="GO:0000791">
    <property type="term" value="C:euchromatin"/>
    <property type="evidence" value="ECO:0000250"/>
    <property type="project" value="UniProtKB"/>
</dbReference>
<dbReference type="GO" id="GO:0070062">
    <property type="term" value="C:extracellular exosome"/>
    <property type="evidence" value="ECO:0000250"/>
    <property type="project" value="UniProtKB"/>
</dbReference>
<dbReference type="GO" id="GO:0005634">
    <property type="term" value="C:nucleus"/>
    <property type="evidence" value="ECO:0000250"/>
    <property type="project" value="UniProtKB"/>
</dbReference>
<dbReference type="GO" id="GO:0044530">
    <property type="term" value="C:supraspliceosomal complex"/>
    <property type="evidence" value="ECO:0000250"/>
    <property type="project" value="UniProtKB"/>
</dbReference>
<dbReference type="GO" id="GO:0003682">
    <property type="term" value="F:chromatin binding"/>
    <property type="evidence" value="ECO:0000250"/>
    <property type="project" value="UniProtKB"/>
</dbReference>
<dbReference type="GO" id="GO:0003729">
    <property type="term" value="F:mRNA binding"/>
    <property type="evidence" value="ECO:0000250"/>
    <property type="project" value="UniProtKB"/>
</dbReference>
<dbReference type="GO" id="GO:0003723">
    <property type="term" value="F:RNA binding"/>
    <property type="evidence" value="ECO:0000250"/>
    <property type="project" value="UniProtKB"/>
</dbReference>
<dbReference type="GO" id="GO:0000978">
    <property type="term" value="F:RNA polymerase II cis-regulatory region sequence-specific DNA binding"/>
    <property type="evidence" value="ECO:0000250"/>
    <property type="project" value="UniProtKB"/>
</dbReference>
<dbReference type="GO" id="GO:0017069">
    <property type="term" value="F:snRNA binding"/>
    <property type="evidence" value="ECO:0000318"/>
    <property type="project" value="GO_Central"/>
</dbReference>
<dbReference type="GO" id="GO:0071347">
    <property type="term" value="P:cellular response to interleukin-1"/>
    <property type="evidence" value="ECO:0000250"/>
    <property type="project" value="UniProtKB"/>
</dbReference>
<dbReference type="GO" id="GO:0006509">
    <property type="term" value="P:membrane protein ectodomain proteolysis"/>
    <property type="evidence" value="ECO:0000250"/>
    <property type="project" value="UniProtKB"/>
</dbReference>
<dbReference type="GO" id="GO:0000398">
    <property type="term" value="P:mRNA splicing, via spliceosome"/>
    <property type="evidence" value="ECO:0000318"/>
    <property type="project" value="GO_Central"/>
</dbReference>
<dbReference type="GO" id="GO:0048025">
    <property type="term" value="P:negative regulation of mRNA splicing, via spliceosome"/>
    <property type="evidence" value="ECO:0000250"/>
    <property type="project" value="UniProtKB"/>
</dbReference>
<dbReference type="GO" id="GO:0048026">
    <property type="term" value="P:positive regulation of mRNA splicing, via spliceosome"/>
    <property type="evidence" value="ECO:0000250"/>
    <property type="project" value="UniProtKB"/>
</dbReference>
<dbReference type="GO" id="GO:0045944">
    <property type="term" value="P:positive regulation of transcription by RNA polymerase II"/>
    <property type="evidence" value="ECO:0000250"/>
    <property type="project" value="UniProtKB"/>
</dbReference>
<dbReference type="GO" id="GO:0051260">
    <property type="term" value="P:protein homooligomerization"/>
    <property type="evidence" value="ECO:0000250"/>
    <property type="project" value="UniProtKB"/>
</dbReference>
<dbReference type="GO" id="GO:0000381">
    <property type="term" value="P:regulation of alternative mRNA splicing, via spliceosome"/>
    <property type="evidence" value="ECO:0000250"/>
    <property type="project" value="UniProtKB"/>
</dbReference>
<dbReference type="GO" id="GO:0006366">
    <property type="term" value="P:transcription by RNA polymerase II"/>
    <property type="evidence" value="ECO:0000250"/>
    <property type="project" value="UniProtKB"/>
</dbReference>
<dbReference type="CDD" id="cd12382">
    <property type="entry name" value="RRM_RBMX_like"/>
    <property type="match status" value="1"/>
</dbReference>
<dbReference type="FunFam" id="3.30.70.330:FF:000119">
    <property type="entry name" value="RNA-binding motif protein, X chromosome"/>
    <property type="match status" value="1"/>
</dbReference>
<dbReference type="Gene3D" id="3.30.70.330">
    <property type="match status" value="1"/>
</dbReference>
<dbReference type="InterPro" id="IPR012677">
    <property type="entry name" value="Nucleotide-bd_a/b_plait_sf"/>
</dbReference>
<dbReference type="InterPro" id="IPR035979">
    <property type="entry name" value="RBD_domain_sf"/>
</dbReference>
<dbReference type="InterPro" id="IPR050441">
    <property type="entry name" value="RBM"/>
</dbReference>
<dbReference type="InterPro" id="IPR000504">
    <property type="entry name" value="RRM_dom"/>
</dbReference>
<dbReference type="InterPro" id="IPR003954">
    <property type="entry name" value="RRM_dom_euk"/>
</dbReference>
<dbReference type="PANTHER" id="PTHR48034">
    <property type="entry name" value="TRANSFORMER-2 SEX-DETERMINING PROTEIN-RELATED"/>
    <property type="match status" value="1"/>
</dbReference>
<dbReference type="Pfam" id="PF00076">
    <property type="entry name" value="RRM_1"/>
    <property type="match status" value="1"/>
</dbReference>
<dbReference type="SMART" id="SM00360">
    <property type="entry name" value="RRM"/>
    <property type="match status" value="1"/>
</dbReference>
<dbReference type="SMART" id="SM00361">
    <property type="entry name" value="RRM_1"/>
    <property type="match status" value="1"/>
</dbReference>
<dbReference type="SUPFAM" id="SSF54928">
    <property type="entry name" value="RNA-binding domain, RBD"/>
    <property type="match status" value="1"/>
</dbReference>
<dbReference type="PROSITE" id="PS50102">
    <property type="entry name" value="RRM"/>
    <property type="match status" value="1"/>
</dbReference>
<accession>Q7ZWA3</accession>
<accession>Q6TLG7</accession>
<reference key="1">
    <citation type="journal article" date="2005" name="Dev. Dyn.">
        <title>RBMX gene is essential for brain development in zebrafish.</title>
        <authorList>
            <person name="Tsend-Ayush E."/>
            <person name="O'Sullivan L.A."/>
            <person name="Grutzner F.S."/>
            <person name="Onnebo S.M."/>
            <person name="Lewis R.S."/>
            <person name="Delbridge M.L."/>
            <person name="Graves J.A."/>
            <person name="Ward A.C."/>
        </authorList>
    </citation>
    <scope>NUCLEOTIDE SEQUENCE [MRNA] (ISOFORM 1)</scope>
    <scope>FUNCTION</scope>
    <scope>DEVELOPMENTAL STAGE</scope>
    <source>
        <tissue>Ovary</tissue>
    </source>
</reference>
<reference key="2">
    <citation type="journal article" date="2004" name="Proc. Natl. Acad. Sci. U.S.A.">
        <title>Hematopoietic gene expression profile in zebrafish kidney marrow.</title>
        <authorList>
            <person name="Song H.-D."/>
            <person name="Sun X.-J."/>
            <person name="Deng M."/>
            <person name="Zhang G.-W."/>
            <person name="Zhou Y."/>
            <person name="Wu X.-Y."/>
            <person name="Sheng Y."/>
            <person name="Chen Y."/>
            <person name="Ruan Z."/>
            <person name="Jiang C.-L."/>
            <person name="Fan H.-Y."/>
            <person name="Zon L.I."/>
            <person name="Kanki J.P."/>
            <person name="Liu T.X."/>
            <person name="Look A.T."/>
            <person name="Chen Z."/>
        </authorList>
    </citation>
    <scope>NUCLEOTIDE SEQUENCE [LARGE SCALE MRNA] (ISOFORM 1)</scope>
    <source>
        <tissue>Kidney marrow</tissue>
    </source>
</reference>
<reference key="3">
    <citation type="journal article" date="2013" name="Nature">
        <title>The zebrafish reference genome sequence and its relationship to the human genome.</title>
        <authorList>
            <person name="Howe K."/>
            <person name="Clark M.D."/>
            <person name="Torroja C.F."/>
            <person name="Torrance J."/>
            <person name="Berthelot C."/>
            <person name="Muffato M."/>
            <person name="Collins J.E."/>
            <person name="Humphray S."/>
            <person name="McLaren K."/>
            <person name="Matthews L."/>
            <person name="McLaren S."/>
            <person name="Sealy I."/>
            <person name="Caccamo M."/>
            <person name="Churcher C."/>
            <person name="Scott C."/>
            <person name="Barrett J.C."/>
            <person name="Koch R."/>
            <person name="Rauch G.J."/>
            <person name="White S."/>
            <person name="Chow W."/>
            <person name="Kilian B."/>
            <person name="Quintais L.T."/>
            <person name="Guerra-Assuncao J.A."/>
            <person name="Zhou Y."/>
            <person name="Gu Y."/>
            <person name="Yen J."/>
            <person name="Vogel J.H."/>
            <person name="Eyre T."/>
            <person name="Redmond S."/>
            <person name="Banerjee R."/>
            <person name="Chi J."/>
            <person name="Fu B."/>
            <person name="Langley E."/>
            <person name="Maguire S.F."/>
            <person name="Laird G.K."/>
            <person name="Lloyd D."/>
            <person name="Kenyon E."/>
            <person name="Donaldson S."/>
            <person name="Sehra H."/>
            <person name="Almeida-King J."/>
            <person name="Loveland J."/>
            <person name="Trevanion S."/>
            <person name="Jones M."/>
            <person name="Quail M."/>
            <person name="Willey D."/>
            <person name="Hunt A."/>
            <person name="Burton J."/>
            <person name="Sims S."/>
            <person name="McLay K."/>
            <person name="Plumb B."/>
            <person name="Davis J."/>
            <person name="Clee C."/>
            <person name="Oliver K."/>
            <person name="Clark R."/>
            <person name="Riddle C."/>
            <person name="Elliot D."/>
            <person name="Threadgold G."/>
            <person name="Harden G."/>
            <person name="Ware D."/>
            <person name="Begum S."/>
            <person name="Mortimore B."/>
            <person name="Kerry G."/>
            <person name="Heath P."/>
            <person name="Phillimore B."/>
            <person name="Tracey A."/>
            <person name="Corby N."/>
            <person name="Dunn M."/>
            <person name="Johnson C."/>
            <person name="Wood J."/>
            <person name="Clark S."/>
            <person name="Pelan S."/>
            <person name="Griffiths G."/>
            <person name="Smith M."/>
            <person name="Glithero R."/>
            <person name="Howden P."/>
            <person name="Barker N."/>
            <person name="Lloyd C."/>
            <person name="Stevens C."/>
            <person name="Harley J."/>
            <person name="Holt K."/>
            <person name="Panagiotidis G."/>
            <person name="Lovell J."/>
            <person name="Beasley H."/>
            <person name="Henderson C."/>
            <person name="Gordon D."/>
            <person name="Auger K."/>
            <person name="Wright D."/>
            <person name="Collins J."/>
            <person name="Raisen C."/>
            <person name="Dyer L."/>
            <person name="Leung K."/>
            <person name="Robertson L."/>
            <person name="Ambridge K."/>
            <person name="Leongamornlert D."/>
            <person name="McGuire S."/>
            <person name="Gilderthorp R."/>
            <person name="Griffiths C."/>
            <person name="Manthravadi D."/>
            <person name="Nichol S."/>
            <person name="Barker G."/>
            <person name="Whitehead S."/>
            <person name="Kay M."/>
            <person name="Brown J."/>
            <person name="Murnane C."/>
            <person name="Gray E."/>
            <person name="Humphries M."/>
            <person name="Sycamore N."/>
            <person name="Barker D."/>
            <person name="Saunders D."/>
            <person name="Wallis J."/>
            <person name="Babbage A."/>
            <person name="Hammond S."/>
            <person name="Mashreghi-Mohammadi M."/>
            <person name="Barr L."/>
            <person name="Martin S."/>
            <person name="Wray P."/>
            <person name="Ellington A."/>
            <person name="Matthews N."/>
            <person name="Ellwood M."/>
            <person name="Woodmansey R."/>
            <person name="Clark G."/>
            <person name="Cooper J."/>
            <person name="Tromans A."/>
            <person name="Grafham D."/>
            <person name="Skuce C."/>
            <person name="Pandian R."/>
            <person name="Andrews R."/>
            <person name="Harrison E."/>
            <person name="Kimberley A."/>
            <person name="Garnett J."/>
            <person name="Fosker N."/>
            <person name="Hall R."/>
            <person name="Garner P."/>
            <person name="Kelly D."/>
            <person name="Bird C."/>
            <person name="Palmer S."/>
            <person name="Gehring I."/>
            <person name="Berger A."/>
            <person name="Dooley C.M."/>
            <person name="Ersan-Urun Z."/>
            <person name="Eser C."/>
            <person name="Geiger H."/>
            <person name="Geisler M."/>
            <person name="Karotki L."/>
            <person name="Kirn A."/>
            <person name="Konantz J."/>
            <person name="Konantz M."/>
            <person name="Oberlander M."/>
            <person name="Rudolph-Geiger S."/>
            <person name="Teucke M."/>
            <person name="Lanz C."/>
            <person name="Raddatz G."/>
            <person name="Osoegawa K."/>
            <person name="Zhu B."/>
            <person name="Rapp A."/>
            <person name="Widaa S."/>
            <person name="Langford C."/>
            <person name="Yang F."/>
            <person name="Schuster S.C."/>
            <person name="Carter N.P."/>
            <person name="Harrow J."/>
            <person name="Ning Z."/>
            <person name="Herrero J."/>
            <person name="Searle S.M."/>
            <person name="Enright A."/>
            <person name="Geisler R."/>
            <person name="Plasterk R.H."/>
            <person name="Lee C."/>
            <person name="Westerfield M."/>
            <person name="de Jong P.J."/>
            <person name="Zon L.I."/>
            <person name="Postlethwait J.H."/>
            <person name="Nusslein-Volhard C."/>
            <person name="Hubbard T.J."/>
            <person name="Roest Crollius H."/>
            <person name="Rogers J."/>
            <person name="Stemple D.L."/>
        </authorList>
    </citation>
    <scope>NUCLEOTIDE SEQUENCE [LARGE SCALE GENOMIC DNA]</scope>
    <source>
        <strain>Tuebingen</strain>
    </source>
</reference>
<reference key="4">
    <citation type="submission" date="2004-06" db="EMBL/GenBank/DDBJ databases">
        <authorList>
            <consortium name="NIH - Zebrafish Gene Collection (ZGC) project"/>
        </authorList>
    </citation>
    <scope>NUCLEOTIDE SEQUENCE [LARGE SCALE MRNA] (ISOFORM 2)</scope>
    <source>
        <tissue>Embryo</tissue>
    </source>
</reference>
<organism>
    <name type="scientific">Danio rerio</name>
    <name type="common">Zebrafish</name>
    <name type="synonym">Brachydanio rerio</name>
    <dbReference type="NCBI Taxonomy" id="7955"/>
    <lineage>
        <taxon>Eukaryota</taxon>
        <taxon>Metazoa</taxon>
        <taxon>Chordata</taxon>
        <taxon>Craniata</taxon>
        <taxon>Vertebrata</taxon>
        <taxon>Euteleostomi</taxon>
        <taxon>Actinopterygii</taxon>
        <taxon>Neopterygii</taxon>
        <taxon>Teleostei</taxon>
        <taxon>Ostariophysi</taxon>
        <taxon>Cypriniformes</taxon>
        <taxon>Danionidae</taxon>
        <taxon>Danioninae</taxon>
        <taxon>Danio</taxon>
    </lineage>
</organism>